<accession>P51655</accession>
<accession>Q923C8</accession>
<keyword id="KW-1003">Cell membrane</keyword>
<keyword id="KW-0325">Glycoprotein</keyword>
<keyword id="KW-0336">GPI-anchor</keyword>
<keyword id="KW-0357">Heparan sulfate</keyword>
<keyword id="KW-0449">Lipoprotein</keyword>
<keyword id="KW-0472">Membrane</keyword>
<keyword id="KW-0597">Phosphoprotein</keyword>
<keyword id="KW-0654">Proteoglycan</keyword>
<keyword id="KW-1185">Reference proteome</keyword>
<keyword id="KW-0964">Secreted</keyword>
<keyword id="KW-0732">Signal</keyword>
<reference key="1">
    <citation type="journal article" date="1995" name="J. Cell Biol.">
        <title>K-glypican: a novel GPI-anchored heparan sulfate proteoglycan that is highly expressed in developing brain and kidney.</title>
        <authorList>
            <person name="Watanabe K."/>
            <person name="Yamada H."/>
            <person name="Yamaguchi Y."/>
        </authorList>
    </citation>
    <scope>NUCLEOTIDE SEQUENCE [MRNA]</scope>
    <source>
        <strain>BALB/cJ</strain>
    </source>
</reference>
<reference key="2">
    <citation type="journal article" date="2004" name="Genome Res.">
        <title>The status, quality, and expansion of the NIH full-length cDNA project: the Mammalian Gene Collection (MGC).</title>
        <authorList>
            <consortium name="The MGC Project Team"/>
        </authorList>
    </citation>
    <scope>NUCLEOTIDE SEQUENCE [LARGE SCALE MRNA]</scope>
    <source>
        <tissue>Mammary gland</tissue>
    </source>
</reference>
<reference key="3">
    <citation type="journal article" date="2010" name="Cell">
        <title>A tissue-specific atlas of mouse protein phosphorylation and expression.</title>
        <authorList>
            <person name="Huttlin E.L."/>
            <person name="Jedrychowski M.P."/>
            <person name="Elias J.E."/>
            <person name="Goswami T."/>
            <person name="Rad R."/>
            <person name="Beausoleil S.A."/>
            <person name="Villen J."/>
            <person name="Haas W."/>
            <person name="Sowa M.E."/>
            <person name="Gygi S.P."/>
        </authorList>
    </citation>
    <scope>IDENTIFICATION BY MASS SPECTROMETRY [LARGE SCALE ANALYSIS]</scope>
    <source>
        <tissue>Kidney</tissue>
        <tissue>Lung</tissue>
    </source>
</reference>
<reference key="4">
    <citation type="journal article" date="2019" name="Am. J. Hum. Genet.">
        <title>Pathogenic variants in GPC4 cause Keipert Syndrome.</title>
        <authorList>
            <person name="Amor D.J."/>
            <person name="Stephenson S.E.M."/>
            <person name="Mustapha M."/>
            <person name="Mensah M.A."/>
            <person name="Ockeloen C.W."/>
            <person name="Lee W.S."/>
            <person name="Tankard R.M."/>
            <person name="Phelan D.G."/>
            <person name="Shinawi M."/>
            <person name="de Brouwer A.P.M."/>
            <person name="Pfundt R."/>
            <person name="Dowling C."/>
            <person name="Toler T.L."/>
            <person name="Sutton V.R."/>
            <person name="Agolini E."/>
            <person name="Rinelli M."/>
            <person name="Capolino R."/>
            <person name="Martinelli D."/>
            <person name="Zampino G."/>
            <person name="Dumic M."/>
            <person name="Reardon W."/>
            <person name="Shaw-Smith C."/>
            <person name="Leventer R.J."/>
            <person name="Delatycki M.B."/>
            <person name="Kleefstra T."/>
            <person name="Mundlos S."/>
            <person name="Mortier G."/>
            <person name="Bahlo M."/>
            <person name="Allen N.J."/>
            <person name="Lockhart P.J."/>
        </authorList>
    </citation>
    <scope>DISRUPTION PHENOTYPE</scope>
</reference>
<feature type="signal peptide" evidence="3">
    <location>
        <begin position="1"/>
        <end position="18"/>
    </location>
</feature>
<feature type="chain" id="PRO_0000012317" description="Glypican-4">
    <location>
        <begin position="19"/>
        <end position="529"/>
    </location>
</feature>
<feature type="chain" id="PRO_0000333848" description="Secreted glypican-4">
    <location>
        <begin position="19"/>
        <end status="unknown"/>
    </location>
</feature>
<feature type="propeptide" id="PRO_0000012318" description="Removed in mature form" evidence="3">
    <location>
        <begin position="530"/>
        <end position="557"/>
    </location>
</feature>
<feature type="modified residue" description="Phosphoserine" evidence="2">
    <location>
        <position position="357"/>
    </location>
</feature>
<feature type="lipid moiety-binding region" description="GPI-anchor amidated serine" evidence="3">
    <location>
        <position position="529"/>
    </location>
</feature>
<feature type="glycosylation site" description="O-linked (Xyl...) (glycosaminoglycan) serine" evidence="3">
    <location>
        <position position="494"/>
    </location>
</feature>
<feature type="glycosylation site" description="O-linked (Xyl...) (glycosaminoglycan) serine" evidence="3">
    <location>
        <position position="498"/>
    </location>
</feature>
<feature type="glycosylation site" description="O-linked (Xyl...) (glycosaminoglycan) serine" evidence="3">
    <location>
        <position position="500"/>
    </location>
</feature>
<feature type="glycosylation site" description="N-linked (GlcNAc...) asparagine" evidence="3">
    <location>
        <position position="514"/>
    </location>
</feature>
<feature type="sequence conflict" description="In Ref. 1; CAA58560." evidence="5" ref="1">
    <original>A</original>
    <variation>T</variation>
    <location>
        <position position="537"/>
    </location>
</feature>
<proteinExistence type="evidence at protein level"/>
<dbReference type="EMBL" id="X83577">
    <property type="protein sequence ID" value="CAA58560.1"/>
    <property type="molecule type" value="mRNA"/>
</dbReference>
<dbReference type="EMBL" id="BC006622">
    <property type="protein sequence ID" value="AAH06622.1"/>
    <property type="molecule type" value="mRNA"/>
</dbReference>
<dbReference type="CCDS" id="CCDS30124.1"/>
<dbReference type="PIR" id="A57050">
    <property type="entry name" value="A57050"/>
</dbReference>
<dbReference type="RefSeq" id="NP_032176.2">
    <property type="nucleotide sequence ID" value="NM_008150.2"/>
</dbReference>
<dbReference type="SMR" id="P51655"/>
<dbReference type="BioGRID" id="200014">
    <property type="interactions" value="5"/>
</dbReference>
<dbReference type="FunCoup" id="P51655">
    <property type="interactions" value="507"/>
</dbReference>
<dbReference type="IntAct" id="P51655">
    <property type="interactions" value="1"/>
</dbReference>
<dbReference type="MINT" id="P51655"/>
<dbReference type="STRING" id="10090.ENSMUSP00000033450"/>
<dbReference type="GlyCosmos" id="P51655">
    <property type="glycosylation" value="4 sites, No reported glycans"/>
</dbReference>
<dbReference type="GlyGen" id="P51655">
    <property type="glycosylation" value="5 sites"/>
</dbReference>
<dbReference type="iPTMnet" id="P51655"/>
<dbReference type="PhosphoSitePlus" id="P51655"/>
<dbReference type="SwissPalm" id="P51655"/>
<dbReference type="jPOST" id="P51655"/>
<dbReference type="PaxDb" id="10090-ENSMUSP00000033450"/>
<dbReference type="PeptideAtlas" id="P51655"/>
<dbReference type="ProteomicsDB" id="271315"/>
<dbReference type="Pumba" id="P51655"/>
<dbReference type="Antibodypedia" id="30267">
    <property type="antibodies" value="405 antibodies from 30 providers"/>
</dbReference>
<dbReference type="DNASU" id="14735"/>
<dbReference type="Ensembl" id="ENSMUST00000033450.3">
    <property type="protein sequence ID" value="ENSMUSP00000033450.3"/>
    <property type="gene ID" value="ENSMUSG00000031119.5"/>
</dbReference>
<dbReference type="GeneID" id="14735"/>
<dbReference type="KEGG" id="mmu:14735"/>
<dbReference type="UCSC" id="uc012hhb.1">
    <property type="organism name" value="mouse"/>
</dbReference>
<dbReference type="AGR" id="MGI:104902"/>
<dbReference type="CTD" id="2239"/>
<dbReference type="MGI" id="MGI:104902">
    <property type="gene designation" value="Gpc4"/>
</dbReference>
<dbReference type="VEuPathDB" id="HostDB:ENSMUSG00000031119"/>
<dbReference type="eggNOG" id="KOG3821">
    <property type="taxonomic scope" value="Eukaryota"/>
</dbReference>
<dbReference type="GeneTree" id="ENSGT01050000244897"/>
<dbReference type="HOGENOM" id="CLU_024658_2_0_1"/>
<dbReference type="InParanoid" id="P51655"/>
<dbReference type="OMA" id="WNHFVEA"/>
<dbReference type="OrthoDB" id="10010764at2759"/>
<dbReference type="PhylomeDB" id="P51655"/>
<dbReference type="TreeFam" id="TF105317"/>
<dbReference type="Reactome" id="R-MMU-1971475">
    <property type="pathway name" value="A tetrasaccharide linker sequence is required for GAG synthesis"/>
</dbReference>
<dbReference type="Reactome" id="R-MMU-2022928">
    <property type="pathway name" value="HS-GAG biosynthesis"/>
</dbReference>
<dbReference type="Reactome" id="R-MMU-2024096">
    <property type="pathway name" value="HS-GAG degradation"/>
</dbReference>
<dbReference type="Reactome" id="R-MMU-975634">
    <property type="pathway name" value="Retinoid metabolism and transport"/>
</dbReference>
<dbReference type="BioGRID-ORCS" id="14735">
    <property type="hits" value="2 hits in 80 CRISPR screens"/>
</dbReference>
<dbReference type="CD-CODE" id="CE726F99">
    <property type="entry name" value="Postsynaptic density"/>
</dbReference>
<dbReference type="ChiTaRS" id="Gpc4">
    <property type="organism name" value="mouse"/>
</dbReference>
<dbReference type="PRO" id="PR:P51655"/>
<dbReference type="Proteomes" id="UP000000589">
    <property type="component" value="Chromosome X"/>
</dbReference>
<dbReference type="RNAct" id="P51655">
    <property type="molecule type" value="protein"/>
</dbReference>
<dbReference type="Bgee" id="ENSMUSG00000031119">
    <property type="expression patterns" value="Expressed in metanephric proximal tubule and 277 other cell types or tissues"/>
</dbReference>
<dbReference type="GO" id="GO:0062023">
    <property type="term" value="C:collagen-containing extracellular matrix"/>
    <property type="evidence" value="ECO:0007005"/>
    <property type="project" value="BHF-UCL"/>
</dbReference>
<dbReference type="GO" id="GO:0009897">
    <property type="term" value="C:external side of plasma membrane"/>
    <property type="evidence" value="ECO:0000266"/>
    <property type="project" value="MGI"/>
</dbReference>
<dbReference type="GO" id="GO:0005615">
    <property type="term" value="C:extracellular space"/>
    <property type="evidence" value="ECO:0007005"/>
    <property type="project" value="BHF-UCL"/>
</dbReference>
<dbReference type="GO" id="GO:0098978">
    <property type="term" value="C:glutamatergic synapse"/>
    <property type="evidence" value="ECO:0000314"/>
    <property type="project" value="SynGO"/>
</dbReference>
<dbReference type="GO" id="GO:0005796">
    <property type="term" value="C:Golgi lumen"/>
    <property type="evidence" value="ECO:0000304"/>
    <property type="project" value="Reactome"/>
</dbReference>
<dbReference type="GO" id="GO:0042734">
    <property type="term" value="C:presynaptic membrane"/>
    <property type="evidence" value="ECO:0007669"/>
    <property type="project" value="Ensembl"/>
</dbReference>
<dbReference type="GO" id="GO:0045202">
    <property type="term" value="C:synapse"/>
    <property type="evidence" value="ECO:0000314"/>
    <property type="project" value="SynGO"/>
</dbReference>
<dbReference type="GO" id="GO:0098696">
    <property type="term" value="P:regulation of neurotransmitter receptor localization to postsynaptic specialization membrane"/>
    <property type="evidence" value="ECO:0007669"/>
    <property type="project" value="Ensembl"/>
</dbReference>
<dbReference type="GO" id="GO:1905606">
    <property type="term" value="P:regulation of presynapse assembly"/>
    <property type="evidence" value="ECO:0007669"/>
    <property type="project" value="Ensembl"/>
</dbReference>
<dbReference type="GO" id="GO:0009966">
    <property type="term" value="P:regulation of signal transduction"/>
    <property type="evidence" value="ECO:0007669"/>
    <property type="project" value="InterPro"/>
</dbReference>
<dbReference type="GO" id="GO:0099560">
    <property type="term" value="P:synaptic membrane adhesion"/>
    <property type="evidence" value="ECO:0000314"/>
    <property type="project" value="SynGO"/>
</dbReference>
<dbReference type="GO" id="GO:0016055">
    <property type="term" value="P:Wnt signaling pathway"/>
    <property type="evidence" value="ECO:0007669"/>
    <property type="project" value="Ensembl"/>
</dbReference>
<dbReference type="InterPro" id="IPR001863">
    <property type="entry name" value="Glypican"/>
</dbReference>
<dbReference type="InterPro" id="IPR019803">
    <property type="entry name" value="Glypican_CS"/>
</dbReference>
<dbReference type="PANTHER" id="PTHR10822">
    <property type="entry name" value="GLYPICAN"/>
    <property type="match status" value="1"/>
</dbReference>
<dbReference type="PANTHER" id="PTHR10822:SF25">
    <property type="entry name" value="GLYPICAN-4"/>
    <property type="match status" value="1"/>
</dbReference>
<dbReference type="Pfam" id="PF01153">
    <property type="entry name" value="Glypican"/>
    <property type="match status" value="1"/>
</dbReference>
<dbReference type="PROSITE" id="PS01207">
    <property type="entry name" value="GLYPICAN"/>
    <property type="match status" value="1"/>
</dbReference>
<protein>
    <recommendedName>
        <fullName>Glypican-4</fullName>
    </recommendedName>
    <alternativeName>
        <fullName>K-glypican</fullName>
    </alternativeName>
    <component>
        <recommendedName>
            <fullName>Secreted glypican-4</fullName>
        </recommendedName>
    </component>
</protein>
<organism>
    <name type="scientific">Mus musculus</name>
    <name type="common">Mouse</name>
    <dbReference type="NCBI Taxonomy" id="10090"/>
    <lineage>
        <taxon>Eukaryota</taxon>
        <taxon>Metazoa</taxon>
        <taxon>Chordata</taxon>
        <taxon>Craniata</taxon>
        <taxon>Vertebrata</taxon>
        <taxon>Euteleostomi</taxon>
        <taxon>Mammalia</taxon>
        <taxon>Eutheria</taxon>
        <taxon>Euarchontoglires</taxon>
        <taxon>Glires</taxon>
        <taxon>Rodentia</taxon>
        <taxon>Myomorpha</taxon>
        <taxon>Muroidea</taxon>
        <taxon>Muridae</taxon>
        <taxon>Murinae</taxon>
        <taxon>Mus</taxon>
        <taxon>Mus</taxon>
    </lineage>
</organism>
<gene>
    <name type="primary">Gpc4</name>
</gene>
<sequence>MARLGLLALLCTLAALSASLLAAELKSKSCSEVRRLYVSKGFNKNDAPLYEINGDHLKICPQDYTCCSQEMEEKYSLQSKDDFKTVVSEQCNHLQAIFASRYKKFDEFFKELLENAEKSLNDMFVKTYGHLYMQNSELFKDLFVELKRYYVAGNVNLEEMLNDFWARLLERMFRLVNSQYHFTDEYLECVSKYTEQLKPFGDVPRKLKLQVTRAFVAARTFAQGLAVARDVVSKVSVVNPTAQCTHALLKMIYCSHCRGLVTVKPCYNYCSNIMRGCLANQGDLDFEWNNFIDAMLMVAERLEGPFNIESVMDPIDVKISDAIMNMQDNSVQVSQKVFQGCGPPKPLPAGRISRSISESAFSARFRPYHPEQRPTTAAGTSLDRLVTDVKEKLKQAKKFWSSLPSTVCNDERMAAGNENEDDCWNGKGKSRYLFAVTGNGLANQGNNPEVQVDTSKPDILILRQIMALRVMTSKMKNAYNGNDVDFFDISDESSGEGSGSGCEYQQCPSEFEYNATDHSGKSANEKADSAGGAHAEAKPYLLAALCILFLAVQGEWR</sequence>
<name>GPC4_MOUSE</name>
<evidence type="ECO:0000250" key="1"/>
<evidence type="ECO:0000250" key="2">
    <source>
        <dbReference type="UniProtKB" id="O75487"/>
    </source>
</evidence>
<evidence type="ECO:0000255" key="3"/>
<evidence type="ECO:0000269" key="4">
    <source>
    </source>
</evidence>
<evidence type="ECO:0000305" key="5"/>
<comment type="function">
    <text>Cell surface proteoglycan that bears heparan sulfate. May be involved in the development of kidney tubules and of the central nervous system.</text>
</comment>
<comment type="subcellular location">
    <subcellularLocation>
        <location>Cell membrane</location>
        <topology>Lipid-anchor</topology>
        <topology>GPI-anchor</topology>
        <orientation>Extracellular side</orientation>
    </subcellularLocation>
</comment>
<comment type="subcellular location">
    <molecule>Secreted glypican-4</molecule>
    <subcellularLocation>
        <location evidence="1">Secreted</location>
        <location evidence="1">Extracellular space</location>
    </subcellularLocation>
</comment>
<comment type="tissue specificity">
    <text>Highly expressed in developing brain and kidney.</text>
</comment>
<comment type="disruption phenotype">
    <text evidence="4">Knockout mice have short fore and hind paws, and display a significant decrease in the length of the snout.</text>
</comment>
<comment type="similarity">
    <text evidence="5">Belongs to the glypican family.</text>
</comment>